<protein>
    <recommendedName>
        <fullName>Zinc finger protein 39</fullName>
        <shortName>Zfp-39</shortName>
    </recommendedName>
    <alternativeName>
        <fullName>CtFIN33</fullName>
    </alternativeName>
</protein>
<gene>
    <name type="primary">Zfp39</name>
    <name type="synonym">Zfp-39</name>
</gene>
<organism>
    <name type="scientific">Mus musculus</name>
    <name type="common">Mouse</name>
    <dbReference type="NCBI Taxonomy" id="10090"/>
    <lineage>
        <taxon>Eukaryota</taxon>
        <taxon>Metazoa</taxon>
        <taxon>Chordata</taxon>
        <taxon>Craniata</taxon>
        <taxon>Vertebrata</taxon>
        <taxon>Euteleostomi</taxon>
        <taxon>Mammalia</taxon>
        <taxon>Eutheria</taxon>
        <taxon>Euarchontoglires</taxon>
        <taxon>Glires</taxon>
        <taxon>Rodentia</taxon>
        <taxon>Myomorpha</taxon>
        <taxon>Muroidea</taxon>
        <taxon>Muridae</taxon>
        <taxon>Murinae</taxon>
        <taxon>Mus</taxon>
        <taxon>Mus</taxon>
    </lineage>
</organism>
<accession>Q02525</accession>
<accession>Q2YDX7</accession>
<accession>Q5NC60</accession>
<accession>Q8BL91</accession>
<comment type="function">
    <text>A putative DNA-binding regulatory protein associated with meiosis in spermatogenesis.</text>
</comment>
<comment type="subcellular location">
    <subcellularLocation>
        <location>Nucleus</location>
    </subcellularLocation>
</comment>
<comment type="tissue specificity">
    <text>Predominantly in the spermatocytes and spermatids of testes.</text>
</comment>
<comment type="developmental stage">
    <text>First detected between 2 and 3 weeks after birth, in parallel with the onset and progression of meiosis.</text>
</comment>
<comment type="sequence caution" evidence="3">
    <conflict type="frameshift">
        <sequence resource="EMBL-CDS" id="BAA01479"/>
    </conflict>
</comment>
<sequence>MRNLQPDSVENSLSQLPSRCLETRKRKRSYKKRPVTYSYWRRTQRNRARKHKAPVKGLVSFEDVSVDFTWDEWQDLDDSQRKLYRDVMLETYSSLESLGHCITKPEVIFKLEQGAEPWRAEDVPKQSRADVQKITELNETSQDNEERHLWHHAITYSNKSTEEKVKLGNIVNVSSNCVSNLTVKNGNSSGMRPVALTVWQSVLPPNKPDDTRIGEELDASLTSEPPIHAEHPGLYSRAPGTGQQFQCCMQEVTCNTKALWTKRFHIAHGSSKFGESEKVPDEVALHAQDVSWVRAETFECSICKKTFCTKCELMKHKKIHKGQQYYTCRDCEKTFIKESYHTDQRVHAGVGSHRCKQCEKCFHQKNQQNVHERVPREARLWEVYQSENSFGEKPNLRRYQRTRAGYKPYGCNLCGKAFYRKSHLGRHQKIHTGEKPYGCEECKKTFYHKSSLTIHQRTHTGEKPYECKKCRKTFYCKSDLNVHHRTHTGEKPYECDECRKTFYSKSHLVIHQKVHTGDKPYECEECQKAFSRKSNLTVHQKTHTGEKPYECNVCGKTFHRQSHLNMHQGTHTGQKPYQCEECGKAFYQKSSLRRHQRNHTGSRPYACEECRKTFLHKSSLTVHQRSHTGYKPYSCEECRKTFYSKSHLTVHQRTHTGEKPYECKLCKKAFHQKSYLNRHQVTHGSEKRFECQECRKTFYHKSSLTVHQRIHLRELLCV</sequence>
<feature type="chain" id="PRO_0000047298" description="Zinc finger protein 39">
    <location>
        <begin position="1"/>
        <end position="718"/>
    </location>
</feature>
<feature type="domain" description="KRAB" evidence="2">
    <location>
        <begin position="59"/>
        <end position="130"/>
    </location>
</feature>
<feature type="zinc finger region" description="C2H2-type 1" evidence="1">
    <location>
        <begin position="298"/>
        <end position="320"/>
    </location>
</feature>
<feature type="zinc finger region" description="C2H2-type 2; degenerate" evidence="1">
    <location>
        <begin position="353"/>
        <end position="375"/>
    </location>
</feature>
<feature type="zinc finger region" description="C2H2-type 3" evidence="1">
    <location>
        <begin position="409"/>
        <end position="431"/>
    </location>
</feature>
<feature type="zinc finger region" description="C2H2-type 4" evidence="1">
    <location>
        <begin position="437"/>
        <end position="459"/>
    </location>
</feature>
<feature type="zinc finger region" description="C2H2-type 5" evidence="1">
    <location>
        <begin position="465"/>
        <end position="487"/>
    </location>
</feature>
<feature type="zinc finger region" description="C2H2-type 6" evidence="1">
    <location>
        <begin position="493"/>
        <end position="515"/>
    </location>
</feature>
<feature type="zinc finger region" description="C2H2-type 7" evidence="1">
    <location>
        <begin position="521"/>
        <end position="543"/>
    </location>
</feature>
<feature type="zinc finger region" description="C2H2-type 8" evidence="1">
    <location>
        <begin position="549"/>
        <end position="571"/>
    </location>
</feature>
<feature type="zinc finger region" description="C2H2-type 9" evidence="1">
    <location>
        <begin position="577"/>
        <end position="599"/>
    </location>
</feature>
<feature type="zinc finger region" description="C2H2-type 10" evidence="1">
    <location>
        <begin position="605"/>
        <end position="627"/>
    </location>
</feature>
<feature type="zinc finger region" description="C2H2-type 11" evidence="1">
    <location>
        <begin position="633"/>
        <end position="655"/>
    </location>
</feature>
<feature type="zinc finger region" description="C2H2-type 12" evidence="1">
    <location>
        <begin position="661"/>
        <end position="683"/>
    </location>
</feature>
<feature type="zinc finger region" description="C2H2-type 13" evidence="1">
    <location>
        <begin position="689"/>
        <end position="711"/>
    </location>
</feature>
<feature type="sequence conflict" description="In Ref. 3; AAI08272." evidence="3" ref="3">
    <original>S</original>
    <variation>R</variation>
    <location>
        <position position="93"/>
    </location>
</feature>
<feature type="sequence conflict" description="In Ref. 1; BAC32541." evidence="3" ref="1">
    <original>K</original>
    <variation>E</variation>
    <location>
        <position position="184"/>
    </location>
</feature>
<feature type="sequence conflict" description="In Ref. 3; AAI08272." evidence="3" ref="3">
    <original>K</original>
    <variation>E</variation>
    <location>
        <position position="207"/>
    </location>
</feature>
<feature type="sequence conflict" description="In Ref. 3; AAI08272." evidence="3" ref="3">
    <original>I</original>
    <variation>T</variation>
    <location>
        <position position="213"/>
    </location>
</feature>
<feature type="sequence conflict" description="In Ref. 3; AAI08272." evidence="3" ref="3">
    <original>H</original>
    <variation>L</variation>
    <location>
        <position position="265"/>
    </location>
</feature>
<feature type="sequence conflict" description="In Ref. 3; AAI08272 and 4; BAA01479." evidence="3" ref="3 4">
    <original>K</original>
    <variation>M</variation>
    <location>
        <position position="337"/>
    </location>
</feature>
<feature type="sequence conflict" description="In Ref. 3; AAI08272 and 4; BAA01479." evidence="3" ref="3 4">
    <original>V</original>
    <variation>A</variation>
    <location>
        <position position="346"/>
    </location>
</feature>
<feature type="sequence conflict" description="In Ref. 3; AAI08272 and 4; BAA01479." evidence="3" ref="3 4">
    <original>V</original>
    <variation>G</variation>
    <location>
        <position position="350"/>
    </location>
</feature>
<feature type="sequence conflict" description="In Ref. 3; AAI08272 and 4; BAA01479." evidence="3" ref="3 4">
    <original>H</original>
    <variation>Q</variation>
    <location>
        <position position="353"/>
    </location>
</feature>
<feature type="sequence conflict" description="In Ref. 3; AAI08272 and 4; BAA01479." evidence="3" ref="3 4">
    <original>S</original>
    <variation>P</variation>
    <location>
        <position position="386"/>
    </location>
</feature>
<feature type="sequence conflict" description="In Ref. 3; AAI08272." evidence="3" ref="3">
    <original>N</original>
    <variation>K</variation>
    <location>
        <position position="388"/>
    </location>
</feature>
<feature type="sequence conflict" description="In Ref. 3; AAI08272 and 4; BAA01479." evidence="3" ref="3 4">
    <original>N</original>
    <variation>S</variation>
    <location>
        <position position="412"/>
    </location>
</feature>
<feature type="sequence conflict" description="In Ref. 4; BAA01479." evidence="3" ref="4">
    <original>KT</original>
    <variation>N</variation>
    <location>
        <begin position="472"/>
        <end position="473"/>
    </location>
</feature>
<feature type="sequence conflict" description="In Ref. 3; AAI08272 and 4; BAA01479." evidence="3" ref="3 4">
    <original>D</original>
    <variation>G</variation>
    <location>
        <position position="496"/>
    </location>
</feature>
<feature type="sequence conflict" description="In Ref. 3; AAI08272." evidence="3" ref="3">
    <original>T</original>
    <variation>R</variation>
    <location>
        <position position="544"/>
    </location>
</feature>
<feature type="sequence conflict" description="In Ref. 3; AAI08272." evidence="3" ref="3">
    <original>Y</original>
    <variation>E</variation>
    <location>
        <position position="630"/>
    </location>
</feature>
<evidence type="ECO:0000255" key="1">
    <source>
        <dbReference type="PROSITE-ProRule" id="PRU00042"/>
    </source>
</evidence>
<evidence type="ECO:0000255" key="2">
    <source>
        <dbReference type="PROSITE-ProRule" id="PRU00119"/>
    </source>
</evidence>
<evidence type="ECO:0000305" key="3"/>
<reference key="1">
    <citation type="journal article" date="2005" name="Science">
        <title>The transcriptional landscape of the mammalian genome.</title>
        <authorList>
            <person name="Carninci P."/>
            <person name="Kasukawa T."/>
            <person name="Katayama S."/>
            <person name="Gough J."/>
            <person name="Frith M.C."/>
            <person name="Maeda N."/>
            <person name="Oyama R."/>
            <person name="Ravasi T."/>
            <person name="Lenhard B."/>
            <person name="Wells C."/>
            <person name="Kodzius R."/>
            <person name="Shimokawa K."/>
            <person name="Bajic V.B."/>
            <person name="Brenner S.E."/>
            <person name="Batalov S."/>
            <person name="Forrest A.R."/>
            <person name="Zavolan M."/>
            <person name="Davis M.J."/>
            <person name="Wilming L.G."/>
            <person name="Aidinis V."/>
            <person name="Allen J.E."/>
            <person name="Ambesi-Impiombato A."/>
            <person name="Apweiler R."/>
            <person name="Aturaliya R.N."/>
            <person name="Bailey T.L."/>
            <person name="Bansal M."/>
            <person name="Baxter L."/>
            <person name="Beisel K.W."/>
            <person name="Bersano T."/>
            <person name="Bono H."/>
            <person name="Chalk A.M."/>
            <person name="Chiu K.P."/>
            <person name="Choudhary V."/>
            <person name="Christoffels A."/>
            <person name="Clutterbuck D.R."/>
            <person name="Crowe M.L."/>
            <person name="Dalla E."/>
            <person name="Dalrymple B.P."/>
            <person name="de Bono B."/>
            <person name="Della Gatta G."/>
            <person name="di Bernardo D."/>
            <person name="Down T."/>
            <person name="Engstrom P."/>
            <person name="Fagiolini M."/>
            <person name="Faulkner G."/>
            <person name="Fletcher C.F."/>
            <person name="Fukushima T."/>
            <person name="Furuno M."/>
            <person name="Futaki S."/>
            <person name="Gariboldi M."/>
            <person name="Georgii-Hemming P."/>
            <person name="Gingeras T.R."/>
            <person name="Gojobori T."/>
            <person name="Green R.E."/>
            <person name="Gustincich S."/>
            <person name="Harbers M."/>
            <person name="Hayashi Y."/>
            <person name="Hensch T.K."/>
            <person name="Hirokawa N."/>
            <person name="Hill D."/>
            <person name="Huminiecki L."/>
            <person name="Iacono M."/>
            <person name="Ikeo K."/>
            <person name="Iwama A."/>
            <person name="Ishikawa T."/>
            <person name="Jakt M."/>
            <person name="Kanapin A."/>
            <person name="Katoh M."/>
            <person name="Kawasawa Y."/>
            <person name="Kelso J."/>
            <person name="Kitamura H."/>
            <person name="Kitano H."/>
            <person name="Kollias G."/>
            <person name="Krishnan S.P."/>
            <person name="Kruger A."/>
            <person name="Kummerfeld S.K."/>
            <person name="Kurochkin I.V."/>
            <person name="Lareau L.F."/>
            <person name="Lazarevic D."/>
            <person name="Lipovich L."/>
            <person name="Liu J."/>
            <person name="Liuni S."/>
            <person name="McWilliam S."/>
            <person name="Madan Babu M."/>
            <person name="Madera M."/>
            <person name="Marchionni L."/>
            <person name="Matsuda H."/>
            <person name="Matsuzawa S."/>
            <person name="Miki H."/>
            <person name="Mignone F."/>
            <person name="Miyake S."/>
            <person name="Morris K."/>
            <person name="Mottagui-Tabar S."/>
            <person name="Mulder N."/>
            <person name="Nakano N."/>
            <person name="Nakauchi H."/>
            <person name="Ng P."/>
            <person name="Nilsson R."/>
            <person name="Nishiguchi S."/>
            <person name="Nishikawa S."/>
            <person name="Nori F."/>
            <person name="Ohara O."/>
            <person name="Okazaki Y."/>
            <person name="Orlando V."/>
            <person name="Pang K.C."/>
            <person name="Pavan W.J."/>
            <person name="Pavesi G."/>
            <person name="Pesole G."/>
            <person name="Petrovsky N."/>
            <person name="Piazza S."/>
            <person name="Reed J."/>
            <person name="Reid J.F."/>
            <person name="Ring B.Z."/>
            <person name="Ringwald M."/>
            <person name="Rost B."/>
            <person name="Ruan Y."/>
            <person name="Salzberg S.L."/>
            <person name="Sandelin A."/>
            <person name="Schneider C."/>
            <person name="Schoenbach C."/>
            <person name="Sekiguchi K."/>
            <person name="Semple C.A."/>
            <person name="Seno S."/>
            <person name="Sessa L."/>
            <person name="Sheng Y."/>
            <person name="Shibata Y."/>
            <person name="Shimada H."/>
            <person name="Shimada K."/>
            <person name="Silva D."/>
            <person name="Sinclair B."/>
            <person name="Sperling S."/>
            <person name="Stupka E."/>
            <person name="Sugiura K."/>
            <person name="Sultana R."/>
            <person name="Takenaka Y."/>
            <person name="Taki K."/>
            <person name="Tammoja K."/>
            <person name="Tan S.L."/>
            <person name="Tang S."/>
            <person name="Taylor M.S."/>
            <person name="Tegner J."/>
            <person name="Teichmann S.A."/>
            <person name="Ueda H.R."/>
            <person name="van Nimwegen E."/>
            <person name="Verardo R."/>
            <person name="Wei C.L."/>
            <person name="Yagi K."/>
            <person name="Yamanishi H."/>
            <person name="Zabarovsky E."/>
            <person name="Zhu S."/>
            <person name="Zimmer A."/>
            <person name="Hide W."/>
            <person name="Bult C."/>
            <person name="Grimmond S.M."/>
            <person name="Teasdale R.D."/>
            <person name="Liu E.T."/>
            <person name="Brusic V."/>
            <person name="Quackenbush J."/>
            <person name="Wahlestedt C."/>
            <person name="Mattick J.S."/>
            <person name="Hume D.A."/>
            <person name="Kai C."/>
            <person name="Sasaki D."/>
            <person name="Tomaru Y."/>
            <person name="Fukuda S."/>
            <person name="Kanamori-Katayama M."/>
            <person name="Suzuki M."/>
            <person name="Aoki J."/>
            <person name="Arakawa T."/>
            <person name="Iida J."/>
            <person name="Imamura K."/>
            <person name="Itoh M."/>
            <person name="Kato T."/>
            <person name="Kawaji H."/>
            <person name="Kawagashira N."/>
            <person name="Kawashima T."/>
            <person name="Kojima M."/>
            <person name="Kondo S."/>
            <person name="Konno H."/>
            <person name="Nakano K."/>
            <person name="Ninomiya N."/>
            <person name="Nishio T."/>
            <person name="Okada M."/>
            <person name="Plessy C."/>
            <person name="Shibata K."/>
            <person name="Shiraki T."/>
            <person name="Suzuki S."/>
            <person name="Tagami M."/>
            <person name="Waki K."/>
            <person name="Watahiki A."/>
            <person name="Okamura-Oho Y."/>
            <person name="Suzuki H."/>
            <person name="Kawai J."/>
            <person name="Hayashizaki Y."/>
        </authorList>
    </citation>
    <scope>NUCLEOTIDE SEQUENCE [LARGE SCALE MRNA]</scope>
    <source>
        <strain>C57BL/6J</strain>
        <tissue>Corpora quadrigemina</tissue>
    </source>
</reference>
<reference key="2">
    <citation type="journal article" date="2009" name="PLoS Biol.">
        <title>Lineage-specific biology revealed by a finished genome assembly of the mouse.</title>
        <authorList>
            <person name="Church D.M."/>
            <person name="Goodstadt L."/>
            <person name="Hillier L.W."/>
            <person name="Zody M.C."/>
            <person name="Goldstein S."/>
            <person name="She X."/>
            <person name="Bult C.J."/>
            <person name="Agarwala R."/>
            <person name="Cherry J.L."/>
            <person name="DiCuccio M."/>
            <person name="Hlavina W."/>
            <person name="Kapustin Y."/>
            <person name="Meric P."/>
            <person name="Maglott D."/>
            <person name="Birtle Z."/>
            <person name="Marques A.C."/>
            <person name="Graves T."/>
            <person name="Zhou S."/>
            <person name="Teague B."/>
            <person name="Potamousis K."/>
            <person name="Churas C."/>
            <person name="Place M."/>
            <person name="Herschleb J."/>
            <person name="Runnheim R."/>
            <person name="Forrest D."/>
            <person name="Amos-Landgraf J."/>
            <person name="Schwartz D.C."/>
            <person name="Cheng Z."/>
            <person name="Lindblad-Toh K."/>
            <person name="Eichler E.E."/>
            <person name="Ponting C.P."/>
        </authorList>
    </citation>
    <scope>NUCLEOTIDE SEQUENCE [LARGE SCALE GENOMIC DNA]</scope>
    <source>
        <strain>C57BL/6J</strain>
    </source>
</reference>
<reference key="3">
    <citation type="journal article" date="2004" name="Genome Res.">
        <title>The status, quality, and expansion of the NIH full-length cDNA project: the Mammalian Gene Collection (MGC).</title>
        <authorList>
            <consortium name="The MGC Project Team"/>
        </authorList>
    </citation>
    <scope>NUCLEOTIDE SEQUENCE [LARGE SCALE MRNA]</scope>
    <source>
        <strain>CD-1</strain>
        <tissue>Neural stem cell</tissue>
    </source>
</reference>
<reference key="4">
    <citation type="journal article" date="1992" name="Dev. Biol.">
        <title>Expression of a mouse zinc finger protein gene in both spermatocytes and oocytes during meiosis.</title>
        <authorList>
            <person name="Noce T."/>
            <person name="Fujiwara Y."/>
            <person name="Sezaki M."/>
            <person name="Fujimoto H."/>
            <person name="Higashinakagawa T."/>
        </authorList>
    </citation>
    <scope>NUCLEOTIDE SEQUENCE [MRNA] OF 295-498</scope>
    <source>
        <strain>ICR</strain>
        <tissue>Spermatocyte</tissue>
    </source>
</reference>
<keyword id="KW-0217">Developmental protein</keyword>
<keyword id="KW-0221">Differentiation</keyword>
<keyword id="KW-0238">DNA-binding</keyword>
<keyword id="KW-0479">Metal-binding</keyword>
<keyword id="KW-0539">Nucleus</keyword>
<keyword id="KW-1185">Reference proteome</keyword>
<keyword id="KW-0677">Repeat</keyword>
<keyword id="KW-0744">Spermatogenesis</keyword>
<keyword id="KW-0804">Transcription</keyword>
<keyword id="KW-0805">Transcription regulation</keyword>
<keyword id="KW-0862">Zinc</keyword>
<keyword id="KW-0863">Zinc-finger</keyword>
<name>ZFP39_MOUSE</name>
<proteinExistence type="evidence at transcript level"/>
<dbReference type="EMBL" id="AK045944">
    <property type="protein sequence ID" value="BAC32541.1"/>
    <property type="molecule type" value="mRNA"/>
</dbReference>
<dbReference type="EMBL" id="AL662903">
    <property type="status" value="NOT_ANNOTATED_CDS"/>
    <property type="molecule type" value="Genomic_DNA"/>
</dbReference>
<dbReference type="EMBL" id="BC108271">
    <property type="protein sequence ID" value="AAI08272.1"/>
    <property type="molecule type" value="mRNA"/>
</dbReference>
<dbReference type="EMBL" id="D10629">
    <property type="protein sequence ID" value="BAA01479.1"/>
    <property type="status" value="ALT_FRAME"/>
    <property type="molecule type" value="mRNA"/>
</dbReference>
<dbReference type="CCDS" id="CCDS24752.1"/>
<dbReference type="PIR" id="A48827">
    <property type="entry name" value="A48827"/>
</dbReference>
<dbReference type="RefSeq" id="NP_035888.2">
    <property type="nucleotide sequence ID" value="NM_011758.2"/>
</dbReference>
<dbReference type="SMR" id="Q02525"/>
<dbReference type="STRING" id="10090.ENSMUSP00000099764"/>
<dbReference type="iPTMnet" id="Q02525"/>
<dbReference type="PhosphoSitePlus" id="Q02525"/>
<dbReference type="SwissPalm" id="Q02525"/>
<dbReference type="PaxDb" id="10090-ENSMUSP00000099764"/>
<dbReference type="ProteomicsDB" id="275148"/>
<dbReference type="Pumba" id="Q02525"/>
<dbReference type="Antibodypedia" id="16379">
    <property type="antibodies" value="102 antibodies from 18 providers"/>
</dbReference>
<dbReference type="DNASU" id="22698"/>
<dbReference type="Ensembl" id="ENSMUST00000102703.2">
    <property type="protein sequence ID" value="ENSMUSP00000099764.2"/>
    <property type="gene ID" value="ENSMUSG00000037001.11"/>
</dbReference>
<dbReference type="GeneID" id="22698"/>
<dbReference type="KEGG" id="mmu:22698"/>
<dbReference type="UCSC" id="uc007jcn.1">
    <property type="organism name" value="mouse"/>
</dbReference>
<dbReference type="AGR" id="MGI:99183"/>
<dbReference type="CTD" id="22698"/>
<dbReference type="MGI" id="MGI:99183">
    <property type="gene designation" value="Zfp39"/>
</dbReference>
<dbReference type="VEuPathDB" id="HostDB:ENSMUSG00000037001"/>
<dbReference type="eggNOG" id="KOG1721">
    <property type="taxonomic scope" value="Eukaryota"/>
</dbReference>
<dbReference type="GeneTree" id="ENSGT00940000160177"/>
<dbReference type="HOGENOM" id="CLU_002678_44_5_1"/>
<dbReference type="InParanoid" id="Q02525"/>
<dbReference type="OMA" id="AFHQKSY"/>
<dbReference type="OrthoDB" id="6354171at2759"/>
<dbReference type="PhylomeDB" id="Q02525"/>
<dbReference type="TreeFam" id="TF339594"/>
<dbReference type="Reactome" id="R-MMU-212436">
    <property type="pathway name" value="Generic Transcription Pathway"/>
</dbReference>
<dbReference type="BioGRID-ORCS" id="22698">
    <property type="hits" value="3 hits in 76 CRISPR screens"/>
</dbReference>
<dbReference type="ChiTaRS" id="Zfp39">
    <property type="organism name" value="mouse"/>
</dbReference>
<dbReference type="PRO" id="PR:Q02525"/>
<dbReference type="Proteomes" id="UP000000589">
    <property type="component" value="Chromosome 11"/>
</dbReference>
<dbReference type="RNAct" id="Q02525">
    <property type="molecule type" value="protein"/>
</dbReference>
<dbReference type="Bgee" id="ENSMUSG00000037001">
    <property type="expression patterns" value="Expressed in spermatid and 177 other cell types or tissues"/>
</dbReference>
<dbReference type="GO" id="GO:0005634">
    <property type="term" value="C:nucleus"/>
    <property type="evidence" value="ECO:0007669"/>
    <property type="project" value="UniProtKB-SubCell"/>
</dbReference>
<dbReference type="GO" id="GO:0003677">
    <property type="term" value="F:DNA binding"/>
    <property type="evidence" value="ECO:0007669"/>
    <property type="project" value="UniProtKB-KW"/>
</dbReference>
<dbReference type="GO" id="GO:0008270">
    <property type="term" value="F:zinc ion binding"/>
    <property type="evidence" value="ECO:0007669"/>
    <property type="project" value="UniProtKB-KW"/>
</dbReference>
<dbReference type="GO" id="GO:0030154">
    <property type="term" value="P:cell differentiation"/>
    <property type="evidence" value="ECO:0007669"/>
    <property type="project" value="UniProtKB-KW"/>
</dbReference>
<dbReference type="GO" id="GO:0006355">
    <property type="term" value="P:regulation of DNA-templated transcription"/>
    <property type="evidence" value="ECO:0007669"/>
    <property type="project" value="InterPro"/>
</dbReference>
<dbReference type="GO" id="GO:0007283">
    <property type="term" value="P:spermatogenesis"/>
    <property type="evidence" value="ECO:0007669"/>
    <property type="project" value="UniProtKB-KW"/>
</dbReference>
<dbReference type="CDD" id="cd07765">
    <property type="entry name" value="KRAB_A-box"/>
    <property type="match status" value="1"/>
</dbReference>
<dbReference type="FunFam" id="3.30.160.60:FF:000295">
    <property type="entry name" value="zinc finger protein 19"/>
    <property type="match status" value="2"/>
</dbReference>
<dbReference type="FunFam" id="3.30.160.60:FF:000128">
    <property type="entry name" value="zinc finger protein 268 isoform X1"/>
    <property type="match status" value="1"/>
</dbReference>
<dbReference type="FunFam" id="3.30.160.60:FF:000003">
    <property type="entry name" value="Zinc finger protein 3 homolog"/>
    <property type="match status" value="1"/>
</dbReference>
<dbReference type="FunFam" id="3.30.160.60:FF:000016">
    <property type="entry name" value="zinc finger protein 37 homolog"/>
    <property type="match status" value="1"/>
</dbReference>
<dbReference type="FunFam" id="3.30.160.60:FF:000022">
    <property type="entry name" value="zinc finger protein 383 isoform X1"/>
    <property type="match status" value="1"/>
</dbReference>
<dbReference type="FunFam" id="3.30.160.60:FF:001498">
    <property type="entry name" value="Zinc finger protein 404"/>
    <property type="match status" value="3"/>
</dbReference>
<dbReference type="FunFam" id="3.30.160.60:FF:000060">
    <property type="entry name" value="zinc finger protein 436"/>
    <property type="match status" value="1"/>
</dbReference>
<dbReference type="FunFam" id="3.30.160.60:FF:000564">
    <property type="entry name" value="zinc finger protein 699"/>
    <property type="match status" value="1"/>
</dbReference>
<dbReference type="Gene3D" id="6.10.140.140">
    <property type="match status" value="1"/>
</dbReference>
<dbReference type="Gene3D" id="3.30.160.60">
    <property type="entry name" value="Classic Zinc Finger"/>
    <property type="match status" value="12"/>
</dbReference>
<dbReference type="InterPro" id="IPR001909">
    <property type="entry name" value="KRAB"/>
</dbReference>
<dbReference type="InterPro" id="IPR036051">
    <property type="entry name" value="KRAB_dom_sf"/>
</dbReference>
<dbReference type="InterPro" id="IPR036236">
    <property type="entry name" value="Znf_C2H2_sf"/>
</dbReference>
<dbReference type="InterPro" id="IPR013087">
    <property type="entry name" value="Znf_C2H2_type"/>
</dbReference>
<dbReference type="PANTHER" id="PTHR24399">
    <property type="entry name" value="ZINC FINGER AND BTB DOMAIN-CONTAINING"/>
    <property type="match status" value="1"/>
</dbReference>
<dbReference type="PANTHER" id="PTHR24399:SF49">
    <property type="entry name" value="ZINC FINGER PROTEIN 674"/>
    <property type="match status" value="1"/>
</dbReference>
<dbReference type="Pfam" id="PF01352">
    <property type="entry name" value="KRAB"/>
    <property type="match status" value="1"/>
</dbReference>
<dbReference type="Pfam" id="PF00096">
    <property type="entry name" value="zf-C2H2"/>
    <property type="match status" value="11"/>
</dbReference>
<dbReference type="SMART" id="SM00349">
    <property type="entry name" value="KRAB"/>
    <property type="match status" value="1"/>
</dbReference>
<dbReference type="SMART" id="SM00355">
    <property type="entry name" value="ZnF_C2H2"/>
    <property type="match status" value="14"/>
</dbReference>
<dbReference type="SUPFAM" id="SSF57667">
    <property type="entry name" value="beta-beta-alpha zinc fingers"/>
    <property type="match status" value="8"/>
</dbReference>
<dbReference type="SUPFAM" id="SSF109640">
    <property type="entry name" value="KRAB domain (Kruppel-associated box)"/>
    <property type="match status" value="1"/>
</dbReference>
<dbReference type="PROSITE" id="PS50805">
    <property type="entry name" value="KRAB"/>
    <property type="match status" value="1"/>
</dbReference>
<dbReference type="PROSITE" id="PS00028">
    <property type="entry name" value="ZINC_FINGER_C2H2_1"/>
    <property type="match status" value="12"/>
</dbReference>
<dbReference type="PROSITE" id="PS50157">
    <property type="entry name" value="ZINC_FINGER_C2H2_2"/>
    <property type="match status" value="12"/>
</dbReference>